<name>RL36_DICTD</name>
<gene>
    <name evidence="1" type="primary">rpmJ</name>
    <name type="ordered locus">Dtur_1004</name>
</gene>
<feature type="chain" id="PRO_1000196189" description="Large ribosomal subunit protein bL36">
    <location>
        <begin position="1"/>
        <end position="37"/>
    </location>
</feature>
<protein>
    <recommendedName>
        <fullName evidence="1">Large ribosomal subunit protein bL36</fullName>
    </recommendedName>
    <alternativeName>
        <fullName evidence="2">50S ribosomal protein L36</fullName>
    </alternativeName>
</protein>
<keyword id="KW-1185">Reference proteome</keyword>
<keyword id="KW-0687">Ribonucleoprotein</keyword>
<keyword id="KW-0689">Ribosomal protein</keyword>
<organism>
    <name type="scientific">Dictyoglomus turgidum (strain DSM 6724 / Z-1310)</name>
    <dbReference type="NCBI Taxonomy" id="515635"/>
    <lineage>
        <taxon>Bacteria</taxon>
        <taxon>Pseudomonadati</taxon>
        <taxon>Dictyoglomota</taxon>
        <taxon>Dictyoglomia</taxon>
        <taxon>Dictyoglomales</taxon>
        <taxon>Dictyoglomaceae</taxon>
        <taxon>Dictyoglomus</taxon>
    </lineage>
</organism>
<accession>B8E1F6</accession>
<dbReference type="EMBL" id="CP001251">
    <property type="protein sequence ID" value="ACK42284.1"/>
    <property type="molecule type" value="Genomic_DNA"/>
</dbReference>
<dbReference type="RefSeq" id="WP_012548601.1">
    <property type="nucleotide sequence ID" value="NC_011661.1"/>
</dbReference>
<dbReference type="RefSeq" id="YP_002352898.1">
    <property type="nucleotide sequence ID" value="NC_011661.1"/>
</dbReference>
<dbReference type="SMR" id="B8E1F6"/>
<dbReference type="FunCoup" id="B8E1F6">
    <property type="interactions" value="117"/>
</dbReference>
<dbReference type="STRING" id="515635.Dtur_1004"/>
<dbReference type="EnsemblBacteria" id="ACK42284">
    <property type="protein sequence ID" value="ACK42284"/>
    <property type="gene ID" value="Dtur_1004"/>
</dbReference>
<dbReference type="KEGG" id="dtu:Dtur_1004"/>
<dbReference type="PATRIC" id="fig|515635.4.peg.1041"/>
<dbReference type="eggNOG" id="COG0257">
    <property type="taxonomic scope" value="Bacteria"/>
</dbReference>
<dbReference type="HOGENOM" id="CLU_135723_6_2_0"/>
<dbReference type="InParanoid" id="B8E1F6"/>
<dbReference type="OrthoDB" id="9802520at2"/>
<dbReference type="Proteomes" id="UP000007719">
    <property type="component" value="Chromosome"/>
</dbReference>
<dbReference type="GO" id="GO:0005737">
    <property type="term" value="C:cytoplasm"/>
    <property type="evidence" value="ECO:0007669"/>
    <property type="project" value="UniProtKB-ARBA"/>
</dbReference>
<dbReference type="GO" id="GO:1990904">
    <property type="term" value="C:ribonucleoprotein complex"/>
    <property type="evidence" value="ECO:0007669"/>
    <property type="project" value="UniProtKB-KW"/>
</dbReference>
<dbReference type="GO" id="GO:0005840">
    <property type="term" value="C:ribosome"/>
    <property type="evidence" value="ECO:0007669"/>
    <property type="project" value="UniProtKB-KW"/>
</dbReference>
<dbReference type="GO" id="GO:0003735">
    <property type="term" value="F:structural constituent of ribosome"/>
    <property type="evidence" value="ECO:0007669"/>
    <property type="project" value="InterPro"/>
</dbReference>
<dbReference type="GO" id="GO:0006412">
    <property type="term" value="P:translation"/>
    <property type="evidence" value="ECO:0007669"/>
    <property type="project" value="UniProtKB-UniRule"/>
</dbReference>
<dbReference type="HAMAP" id="MF_00251">
    <property type="entry name" value="Ribosomal_bL36"/>
    <property type="match status" value="1"/>
</dbReference>
<dbReference type="InterPro" id="IPR000473">
    <property type="entry name" value="Ribosomal_bL36"/>
</dbReference>
<dbReference type="InterPro" id="IPR035977">
    <property type="entry name" value="Ribosomal_bL36_sp"/>
</dbReference>
<dbReference type="NCBIfam" id="TIGR01022">
    <property type="entry name" value="rpmJ_bact"/>
    <property type="match status" value="1"/>
</dbReference>
<dbReference type="PANTHER" id="PTHR42888">
    <property type="entry name" value="50S RIBOSOMAL PROTEIN L36, CHLOROPLASTIC"/>
    <property type="match status" value="1"/>
</dbReference>
<dbReference type="PANTHER" id="PTHR42888:SF1">
    <property type="entry name" value="LARGE RIBOSOMAL SUBUNIT PROTEIN BL36C"/>
    <property type="match status" value="1"/>
</dbReference>
<dbReference type="Pfam" id="PF00444">
    <property type="entry name" value="Ribosomal_L36"/>
    <property type="match status" value="1"/>
</dbReference>
<dbReference type="SUPFAM" id="SSF57840">
    <property type="entry name" value="Ribosomal protein L36"/>
    <property type="match status" value="1"/>
</dbReference>
<dbReference type="PROSITE" id="PS00828">
    <property type="entry name" value="RIBOSOMAL_L36"/>
    <property type="match status" value="1"/>
</dbReference>
<proteinExistence type="inferred from homology"/>
<evidence type="ECO:0000255" key="1">
    <source>
        <dbReference type="HAMAP-Rule" id="MF_00251"/>
    </source>
</evidence>
<evidence type="ECO:0000305" key="2"/>
<comment type="similarity">
    <text evidence="1">Belongs to the bacterial ribosomal protein bL36 family.</text>
</comment>
<reference key="1">
    <citation type="journal article" date="2016" name="Front. Microbiol.">
        <title>The complete genome sequence of hyperthermophile Dictyoglomus turgidum DSM 6724 reveals a specialized carbohydrate fermentor.</title>
        <authorList>
            <person name="Brumm P.J."/>
            <person name="Gowda K."/>
            <person name="Robb F.T."/>
            <person name="Mead D.A."/>
        </authorList>
    </citation>
    <scope>NUCLEOTIDE SEQUENCE [LARGE SCALE GENOMIC DNA]</scope>
    <source>
        <strain>DSM 6724 / Z-1310</strain>
    </source>
</reference>
<sequence length="37" mass="4327">MKVRSSVKKICEKCKIVRRGGRVFVICENPRHKQKQG</sequence>